<sequence>MCPRAARAPATLLLALGAVLWPAAGAWELTILHTNDVHSRLEQTSEDSSKCVNASRCMGGVARLFTKVQQIRRAEPNVLLLDAGDQYQGTIWFTVYKGAEVAHFMNALRYDAMALGNHEFDNGVEGLIEPLLKEAKFPILSANIKAKGPLASQISGLYLPYKVLPVGDEVVGIVGYTSKETPFLSNPGTNLVFEDEITALQPEVDKLKTLNVNKIIALGHSGFEMDKLIAQKVRGVDVVVGGHSNTFLYTGNPPSKEVPAGKYPFIVTSDDGRKVPVVQAYAFGKYLGYLKIEFDERGNVISSHGNPILLNSSIPEDPSIKADINKWRIKLDNYSTQELGKTIVYLDGSSQSCRFRECNMGNLICDAMINNNLRHTDEMFWNHVSMCILNGGGIRSPIDERNNGTITWENLAAVLPFGGTFDLVQLKGSTLKKAFEHSVHRYGQSTGEFLQVGGIHVVYDLSRKPGDRVVKLDVLCTKCRVPSYDPLKMDEVYKVILPNFLANGGDGFQMIKDELLRHDSGDQDINVVSTYISKMKVIYPAVEGRIKFSTGSHCHGSFSLIFLSLWAVIFVLYQ</sequence>
<evidence type="ECO:0000255" key="1"/>
<evidence type="ECO:0000269" key="2">
    <source>
    </source>
</evidence>
<evidence type="ECO:0000269" key="3">
    <source>
    </source>
</evidence>
<evidence type="ECO:0000269" key="4">
    <source>
    </source>
</evidence>
<evidence type="ECO:0000269" key="5">
    <source>
    </source>
</evidence>
<evidence type="ECO:0000269" key="6">
    <source>
    </source>
</evidence>
<evidence type="ECO:0000269" key="7">
    <source>
    </source>
</evidence>
<evidence type="ECO:0000269" key="8">
    <source>
    </source>
</evidence>
<evidence type="ECO:0000269" key="9">
    <source>
    </source>
</evidence>
<evidence type="ECO:0000269" key="10">
    <source>
    </source>
</evidence>
<evidence type="ECO:0000269" key="11">
    <source>
    </source>
</evidence>
<evidence type="ECO:0000269" key="12">
    <source ref="5"/>
</evidence>
<evidence type="ECO:0000303" key="13">
    <source>
    </source>
</evidence>
<evidence type="ECO:0000303" key="14">
    <source>
    </source>
</evidence>
<evidence type="ECO:0000303" key="15">
    <source>
    </source>
</evidence>
<evidence type="ECO:0000305" key="16"/>
<evidence type="ECO:0000305" key="17">
    <source>
    </source>
</evidence>
<evidence type="ECO:0007744" key="18">
    <source>
        <dbReference type="PDB" id="4H1S"/>
    </source>
</evidence>
<evidence type="ECO:0007744" key="19">
    <source>
        <dbReference type="PDB" id="4H1Y"/>
    </source>
</evidence>
<evidence type="ECO:0007744" key="20">
    <source>
        <dbReference type="PDB" id="4H2B"/>
    </source>
</evidence>
<evidence type="ECO:0007744" key="21">
    <source>
        <dbReference type="PDB" id="4H2F"/>
    </source>
</evidence>
<evidence type="ECO:0007744" key="22">
    <source>
        <dbReference type="PDB" id="4H2G"/>
    </source>
</evidence>
<evidence type="ECO:0007744" key="23">
    <source>
        <dbReference type="PDB" id="4H2I"/>
    </source>
</evidence>
<evidence type="ECO:0007744" key="24">
    <source>
        <dbReference type="PDB" id="7P9N"/>
    </source>
</evidence>
<evidence type="ECO:0007744" key="25">
    <source>
        <dbReference type="PDB" id="7P9R"/>
    </source>
</evidence>
<evidence type="ECO:0007744" key="26">
    <source>
        <dbReference type="PDB" id="7P9T"/>
    </source>
</evidence>
<evidence type="ECO:0007744" key="27">
    <source>
        <dbReference type="PDB" id="7PA4"/>
    </source>
</evidence>
<evidence type="ECO:0007744" key="28">
    <source>
        <dbReference type="PDB" id="7PB5"/>
    </source>
</evidence>
<evidence type="ECO:0007744" key="29">
    <source>
        <dbReference type="PDB" id="7PBA"/>
    </source>
</evidence>
<evidence type="ECO:0007744" key="30">
    <source>
        <dbReference type="PDB" id="7PBB"/>
    </source>
</evidence>
<evidence type="ECO:0007744" key="31">
    <source>
        <dbReference type="PDB" id="7PBY"/>
    </source>
</evidence>
<evidence type="ECO:0007744" key="32">
    <source>
        <dbReference type="PDB" id="7PCP"/>
    </source>
</evidence>
<evidence type="ECO:0007744" key="33">
    <source>
        <dbReference type="PDB" id="7PD9"/>
    </source>
</evidence>
<evidence type="ECO:0007829" key="34">
    <source>
        <dbReference type="PDB" id="6TVE"/>
    </source>
</evidence>
<evidence type="ECO:0007829" key="35">
    <source>
        <dbReference type="PDB" id="7P9T"/>
    </source>
</evidence>
<evidence type="ECO:0007829" key="36">
    <source>
        <dbReference type="PDB" id="7QGA"/>
    </source>
</evidence>
<evidence type="ECO:0007829" key="37">
    <source>
        <dbReference type="PDB" id="7QGM"/>
    </source>
</evidence>
<keyword id="KW-0002">3D-structure</keyword>
<keyword id="KW-0025">Alternative splicing</keyword>
<keyword id="KW-1003">Cell membrane</keyword>
<keyword id="KW-0903">Direct protein sequencing</keyword>
<keyword id="KW-0225">Disease variant</keyword>
<keyword id="KW-1015">Disulfide bond</keyword>
<keyword id="KW-0325">Glycoprotein</keyword>
<keyword id="KW-0336">GPI-anchor</keyword>
<keyword id="KW-0378">Hydrolase</keyword>
<keyword id="KW-0449">Lipoprotein</keyword>
<keyword id="KW-0472">Membrane</keyword>
<keyword id="KW-0479">Metal-binding</keyword>
<keyword id="KW-0547">Nucleotide-binding</keyword>
<keyword id="KW-1267">Proteomics identification</keyword>
<keyword id="KW-1185">Reference proteome</keyword>
<keyword id="KW-0732">Signal</keyword>
<keyword id="KW-0862">Zinc</keyword>
<proteinExistence type="evidence at protein level"/>
<reference key="1">
    <citation type="journal article" date="1990" name="Eur. J. Biochem.">
        <title>Primary structure of human placental 5'-nucleotidase and identification of the glycolipid anchor in the mature form.</title>
        <authorList>
            <person name="Misumi Y."/>
            <person name="Ogata S."/>
            <person name="Ohkubo K."/>
            <person name="Hirose S."/>
            <person name="Ikehara Y."/>
        </authorList>
    </citation>
    <scope>NUCLEOTIDE SEQUENCE [MRNA] (ISOFORM 1)</scope>
    <scope>PARTIAL PROTEIN SEQUENCE</scope>
    <scope>SUBCELLULAR LOCATION</scope>
    <scope>GPI-ANCHOR AT SER-549</scope>
    <source>
        <tissue>Placenta</tissue>
    </source>
</reference>
<reference key="2">
    <citation type="journal article" date="2005" name="DNA Res.">
        <title>Signal sequence and keyword trap in silico for selection of full-length human cDNAs encoding secretion or membrane proteins from oligo-capped cDNA libraries.</title>
        <authorList>
            <person name="Otsuki T."/>
            <person name="Ota T."/>
            <person name="Nishikawa T."/>
            <person name="Hayashi K."/>
            <person name="Suzuki Y."/>
            <person name="Yamamoto J."/>
            <person name="Wakamatsu A."/>
            <person name="Kimura K."/>
            <person name="Sakamoto K."/>
            <person name="Hatano N."/>
            <person name="Kawai Y."/>
            <person name="Ishii S."/>
            <person name="Saito K."/>
            <person name="Kojima S."/>
            <person name="Sugiyama T."/>
            <person name="Ono T."/>
            <person name="Okano K."/>
            <person name="Yoshikawa Y."/>
            <person name="Aotsuka S."/>
            <person name="Sasaki N."/>
            <person name="Hattori A."/>
            <person name="Okumura K."/>
            <person name="Nagai K."/>
            <person name="Sugano S."/>
            <person name="Isogai T."/>
        </authorList>
    </citation>
    <scope>NUCLEOTIDE SEQUENCE [LARGE SCALE MRNA] (ISOFORM 2)</scope>
</reference>
<reference key="3">
    <citation type="journal article" date="2003" name="Nature">
        <title>The DNA sequence and analysis of human chromosome 6.</title>
        <authorList>
            <person name="Mungall A.J."/>
            <person name="Palmer S.A."/>
            <person name="Sims S.K."/>
            <person name="Edwards C.A."/>
            <person name="Ashurst J.L."/>
            <person name="Wilming L."/>
            <person name="Jones M.C."/>
            <person name="Horton R."/>
            <person name="Hunt S.E."/>
            <person name="Scott C.E."/>
            <person name="Gilbert J.G.R."/>
            <person name="Clamp M.E."/>
            <person name="Bethel G."/>
            <person name="Milne S."/>
            <person name="Ainscough R."/>
            <person name="Almeida J.P."/>
            <person name="Ambrose K.D."/>
            <person name="Andrews T.D."/>
            <person name="Ashwell R.I.S."/>
            <person name="Babbage A.K."/>
            <person name="Bagguley C.L."/>
            <person name="Bailey J."/>
            <person name="Banerjee R."/>
            <person name="Barker D.J."/>
            <person name="Barlow K.F."/>
            <person name="Bates K."/>
            <person name="Beare D.M."/>
            <person name="Beasley H."/>
            <person name="Beasley O."/>
            <person name="Bird C.P."/>
            <person name="Blakey S.E."/>
            <person name="Bray-Allen S."/>
            <person name="Brook J."/>
            <person name="Brown A.J."/>
            <person name="Brown J.Y."/>
            <person name="Burford D.C."/>
            <person name="Burrill W."/>
            <person name="Burton J."/>
            <person name="Carder C."/>
            <person name="Carter N.P."/>
            <person name="Chapman J.C."/>
            <person name="Clark S.Y."/>
            <person name="Clark G."/>
            <person name="Clee C.M."/>
            <person name="Clegg S."/>
            <person name="Cobley V."/>
            <person name="Collier R.E."/>
            <person name="Collins J.E."/>
            <person name="Colman L.K."/>
            <person name="Corby N.R."/>
            <person name="Coville G.J."/>
            <person name="Culley K.M."/>
            <person name="Dhami P."/>
            <person name="Davies J."/>
            <person name="Dunn M."/>
            <person name="Earthrowl M.E."/>
            <person name="Ellington A.E."/>
            <person name="Evans K.A."/>
            <person name="Faulkner L."/>
            <person name="Francis M.D."/>
            <person name="Frankish A."/>
            <person name="Frankland J."/>
            <person name="French L."/>
            <person name="Garner P."/>
            <person name="Garnett J."/>
            <person name="Ghori M.J."/>
            <person name="Gilby L.M."/>
            <person name="Gillson C.J."/>
            <person name="Glithero R.J."/>
            <person name="Grafham D.V."/>
            <person name="Grant M."/>
            <person name="Gribble S."/>
            <person name="Griffiths C."/>
            <person name="Griffiths M.N.D."/>
            <person name="Hall R."/>
            <person name="Halls K.S."/>
            <person name="Hammond S."/>
            <person name="Harley J.L."/>
            <person name="Hart E.A."/>
            <person name="Heath P.D."/>
            <person name="Heathcott R."/>
            <person name="Holmes S.J."/>
            <person name="Howden P.J."/>
            <person name="Howe K.L."/>
            <person name="Howell G.R."/>
            <person name="Huckle E."/>
            <person name="Humphray S.J."/>
            <person name="Humphries M.D."/>
            <person name="Hunt A.R."/>
            <person name="Johnson C.M."/>
            <person name="Joy A.A."/>
            <person name="Kay M."/>
            <person name="Keenan S.J."/>
            <person name="Kimberley A.M."/>
            <person name="King A."/>
            <person name="Laird G.K."/>
            <person name="Langford C."/>
            <person name="Lawlor S."/>
            <person name="Leongamornlert D.A."/>
            <person name="Leversha M."/>
            <person name="Lloyd C.R."/>
            <person name="Lloyd D.M."/>
            <person name="Loveland J.E."/>
            <person name="Lovell J."/>
            <person name="Martin S."/>
            <person name="Mashreghi-Mohammadi M."/>
            <person name="Maslen G.L."/>
            <person name="Matthews L."/>
            <person name="McCann O.T."/>
            <person name="McLaren S.J."/>
            <person name="McLay K."/>
            <person name="McMurray A."/>
            <person name="Moore M.J.F."/>
            <person name="Mullikin J.C."/>
            <person name="Niblett D."/>
            <person name="Nickerson T."/>
            <person name="Novik K.L."/>
            <person name="Oliver K."/>
            <person name="Overton-Larty E.K."/>
            <person name="Parker A."/>
            <person name="Patel R."/>
            <person name="Pearce A.V."/>
            <person name="Peck A.I."/>
            <person name="Phillimore B.J.C.T."/>
            <person name="Phillips S."/>
            <person name="Plumb R.W."/>
            <person name="Porter K.M."/>
            <person name="Ramsey Y."/>
            <person name="Ranby S.A."/>
            <person name="Rice C.M."/>
            <person name="Ross M.T."/>
            <person name="Searle S.M."/>
            <person name="Sehra H.K."/>
            <person name="Sheridan E."/>
            <person name="Skuce C.D."/>
            <person name="Smith S."/>
            <person name="Smith M."/>
            <person name="Spraggon L."/>
            <person name="Squares S.L."/>
            <person name="Steward C.A."/>
            <person name="Sycamore N."/>
            <person name="Tamlyn-Hall G."/>
            <person name="Tester J."/>
            <person name="Theaker A.J."/>
            <person name="Thomas D.W."/>
            <person name="Thorpe A."/>
            <person name="Tracey A."/>
            <person name="Tromans A."/>
            <person name="Tubby B."/>
            <person name="Wall M."/>
            <person name="Wallis J.M."/>
            <person name="West A.P."/>
            <person name="White S.S."/>
            <person name="Whitehead S.L."/>
            <person name="Whittaker H."/>
            <person name="Wild A."/>
            <person name="Willey D.J."/>
            <person name="Wilmer T.E."/>
            <person name="Wood J.M."/>
            <person name="Wray P.W."/>
            <person name="Wyatt J.C."/>
            <person name="Young L."/>
            <person name="Younger R.M."/>
            <person name="Bentley D.R."/>
            <person name="Coulson A."/>
            <person name="Durbin R.M."/>
            <person name="Hubbard T."/>
            <person name="Sulston J.E."/>
            <person name="Dunham I."/>
            <person name="Rogers J."/>
            <person name="Beck S."/>
        </authorList>
    </citation>
    <scope>NUCLEOTIDE SEQUENCE [LARGE SCALE GENOMIC DNA]</scope>
</reference>
<reference key="4">
    <citation type="journal article" date="1995" name="Gene">
        <title>Isolation and characterization of the promoter of the human 5'-nucleotidase (CD73)-encoding gene.</title>
        <authorList>
            <person name="Hansen K.R."/>
            <person name="Resta R."/>
            <person name="Webb C.F."/>
            <person name="Thompson L.F."/>
        </authorList>
    </citation>
    <scope>NUCLEOTIDE SEQUENCE [GENOMIC DNA] OF 1-113</scope>
    <source>
        <tissue>Placenta</tissue>
    </source>
</reference>
<reference key="5">
    <citation type="submission" date="1998-05" db="EMBL/GenBank/DDBJ databases">
        <authorList>
            <person name="Zanoni L."/>
            <person name="Rosi F."/>
            <person name="Pagani R."/>
            <person name="Marinello E."/>
        </authorList>
    </citation>
    <scope>NUCLEOTIDE SEQUENCE [GENOMIC DNA] OF 359-489</scope>
    <scope>VARIANT ALA-376</scope>
    <source>
        <tissue>Leukocyte</tissue>
    </source>
</reference>
<reference key="6">
    <citation type="journal article" date="1990" name="Biochem. Biophys. Res. Commun.">
        <title>Characterization of soluble vs membrane-bound human placental 5'-nucleotidase.</title>
        <authorList>
            <person name="Klemens M.R."/>
            <person name="Sherman W.R."/>
            <person name="Holmberg N.J."/>
            <person name="Ruedi J.M."/>
            <person name="Low M.G."/>
            <person name="Thompson L.F."/>
        </authorList>
    </citation>
    <scope>PROTEIN SEQUENCE OF 27-40</scope>
    <source>
        <tissue>Placenta</tissue>
    </source>
</reference>
<reference key="7">
    <citation type="journal article" date="2009" name="J. Proteome Res.">
        <title>Glycoproteomics analysis of human liver tissue by combination of multiple enzyme digestion and hydrazide chemistry.</title>
        <authorList>
            <person name="Chen R."/>
            <person name="Jiang X."/>
            <person name="Sun D."/>
            <person name="Han G."/>
            <person name="Wang F."/>
            <person name="Ye M."/>
            <person name="Wang L."/>
            <person name="Zou H."/>
        </authorList>
    </citation>
    <scope>GLYCOSYLATION [LARGE SCALE ANALYSIS] AT ASN-311; ASN-333 AND ASN-403</scope>
    <source>
        <tissue>Liver</tissue>
    </source>
</reference>
<reference key="8">
    <citation type="journal article" date="2009" name="Nat. Biotechnol.">
        <title>Mass-spectrometric identification and relative quantification of N-linked cell surface glycoproteins.</title>
        <authorList>
            <person name="Wollscheid B."/>
            <person name="Bausch-Fluck D."/>
            <person name="Henderson C."/>
            <person name="O'Brien R."/>
            <person name="Bibel M."/>
            <person name="Schiess R."/>
            <person name="Aebersold R."/>
            <person name="Watts J.D."/>
        </authorList>
    </citation>
    <scope>GLYCOSYLATION [LARGE SCALE ANALYSIS] AT ASN-333</scope>
    <source>
        <tissue>Leukemic T-cell</tissue>
    </source>
</reference>
<reference key="9">
    <citation type="journal article" date="2012" name="Biochem. J.">
        <title>The high-resolution crystal structure of periplasmic Haemophilus influenzae NAD nucleotidase reveals a novel enzymatic function of human CD73 related to NAD metabolism.</title>
        <authorList>
            <person name="Garavaglia S."/>
            <person name="Bruzzone S."/>
            <person name="Cassani C."/>
            <person name="Canella L."/>
            <person name="Allegrone G."/>
            <person name="Sturla L."/>
            <person name="Mannino E."/>
            <person name="Millo E."/>
            <person name="De Flora A."/>
            <person name="Rizzi M."/>
        </authorList>
    </citation>
    <scope>FUNCTION</scope>
    <scope>CATALYTIC ACTIVITY</scope>
</reference>
<reference key="10">
    <citation type="journal article" date="2014" name="J. Proteomics">
        <title>An enzyme assisted RP-RPLC approach for in-depth analysis of human liver phosphoproteome.</title>
        <authorList>
            <person name="Bian Y."/>
            <person name="Song C."/>
            <person name="Cheng K."/>
            <person name="Dong M."/>
            <person name="Wang F."/>
            <person name="Huang J."/>
            <person name="Sun D."/>
            <person name="Wang L."/>
            <person name="Ye M."/>
            <person name="Zou H."/>
        </authorList>
    </citation>
    <scope>IDENTIFICATION BY MASS SPECTROMETRY [LARGE SCALE ANALYSIS]</scope>
    <source>
        <tissue>Liver</tissue>
    </source>
</reference>
<reference evidence="18" key="11">
    <citation type="journal article" date="2012" name="ChemBioChem">
        <title>Crystal structure of a soluble form of human CD73 with ecto-5'-nucleotidase activity.</title>
        <authorList>
            <person name="Heuts D.P."/>
            <person name="Weissenborn M.J."/>
            <person name="Olkhov R.V."/>
            <person name="Shaw A.M."/>
            <person name="Gummadova J."/>
            <person name="Levy C."/>
            <person name="Scrutton N.S."/>
        </authorList>
    </citation>
    <scope>X-RAY CRYSTALLOGRAPHY (2.20 ANGSTROMS) OF 27-549 IN COMPLEX WITH ZN(2+)</scope>
    <scope>ZINC-BINDING</scope>
    <scope>COFACTOR</scope>
    <scope>SUBUNIT</scope>
    <scope>FUNCTION</scope>
    <scope>CATALYTIC ACTIVITY</scope>
    <scope>BIOPHYSICOCHEMICAL PROPERTIES</scope>
    <scope>GLYCOSYLATION AT ASN-311</scope>
    <scope>DISULFIDE BONDS</scope>
</reference>
<reference key="12">
    <citation type="journal article" date="2012" name="Structure">
        <title>Crystal structure of the human ecto-5'-nucleotidase (CD73): insights into the regulation of purinergic signaling.</title>
        <authorList>
            <person name="Knapp K."/>
            <person name="Zebisch M."/>
            <person name="Pippel J."/>
            <person name="El-Tayeb A."/>
            <person name="Muller C.E."/>
            <person name="Strater N."/>
        </authorList>
    </citation>
    <scope>X-RAY CRYSTALLOGRAPHY (1.58 ANGSTROMS) OF 27-549 IN COMPLEXES WITH ATP ANALOG AND ZINC IONS</scope>
    <scope>SUBUNIT</scope>
    <scope>GLYCOSYLATION AT ASN-311</scope>
    <scope>DISULFIDE BONDS</scope>
    <scope>FUNCTION</scope>
    <scope>CATALYTIC ACTIVITY</scope>
    <scope>BIOPHYSICOCHEMICAL PROPERTIES</scope>
    <scope>ACTIVITY REGULATION</scope>
    <scope>COFACTOR</scope>
    <scope>ZINC-BINDING</scope>
    <scope>AMP-BINDING</scope>
</reference>
<reference evidence="24 25 26 27 28 29 30 31 32 33" key="13">
    <citation type="journal article" date="2021" name="Purinergic Signal.">
        <title>Substrate binding modes of purine and pyrimidine nucleotides to human ecto-5'-nucleotidase (CD73) and inhibition by their bisphosphonic acid derivatives.</title>
        <authorList>
            <person name="Scaletti E."/>
            <person name="Huschmann F.U."/>
            <person name="Mueller U."/>
            <person name="Weiss M.S."/>
            <person name="Strater N."/>
        </authorList>
    </citation>
    <scope>X-RAY CRYSTALLOGRAPHY (1.13 ANGSTROMS) OF 27-549 IN COMPLEX WITH GMP</scope>
    <scope>CMP</scope>
    <scope>DCMP</scope>
    <scope>UMP AND IMP</scope>
    <scope>FUNCTION</scope>
    <scope>CATALYTIC ACTIVITY</scope>
    <scope>ACTIVITY REGULATION</scope>
    <scope>BIOPHYSICOCHEMICAL PROPERTIES</scope>
    <scope>COFACTOR</scope>
    <scope>ZINC-BINDING</scope>
    <scope>AMP-BINDING</scope>
    <scope>IMP-BINDING</scope>
</reference>
<reference key="14">
    <citation type="journal article" date="2011" name="N. Engl. J. Med.">
        <title>NT5E mutations and arterial calcifications.</title>
        <authorList>
            <person name="St Hilaire C."/>
            <person name="Ziegler S.G."/>
            <person name="Markello T.C."/>
            <person name="Brusco A."/>
            <person name="Groden C."/>
            <person name="Gill F."/>
            <person name="Carlson-Donohoe H."/>
            <person name="Lederman R.J."/>
            <person name="Chen M.Y."/>
            <person name="Yang D."/>
            <person name="Siegenthaler M.P."/>
            <person name="Arduino C."/>
            <person name="Mancini C."/>
            <person name="Freudenthal B."/>
            <person name="Stanescu H.C."/>
            <person name="Zdebik A.A."/>
            <person name="Chaganti R.K."/>
            <person name="Nussbaum R.L."/>
            <person name="Kleta R."/>
            <person name="Gahl W.A."/>
            <person name="Boehm M."/>
        </authorList>
    </citation>
    <scope>VARIANT CALJA TYR-358</scope>
</reference>
<reference key="15">
    <citation type="journal article" date="2014" name="PLoS ONE">
        <title>NT5E mutations that cause human disease are associated with intracellular mistrafficking of NT5E protein.</title>
        <authorList>
            <person name="Fausther M."/>
            <person name="Lavoie E.G."/>
            <person name="Goree J.R."/>
            <person name="Baldini G."/>
            <person name="Dranoff J.A."/>
        </authorList>
    </citation>
    <scope>CHARACTERIZATION OF VARIANT CALJA TYR-358</scope>
    <scope>FUNCTION</scope>
    <scope>CATALYTIC ACTIVITY</scope>
    <scope>SUBCELLULAR LOCATION</scope>
</reference>
<gene>
    <name type="primary">NT5E</name>
    <name type="synonym">NT5</name>
    <name type="synonym">NTE</name>
</gene>
<accession>P21589</accession>
<accession>B3KQI8</accession>
<accession>O75520</accession>
<accession>Q5W116</accession>
<protein>
    <recommendedName>
        <fullName>5'-nucleotidase</fullName>
        <shortName>5'-NT</shortName>
        <ecNumber evidence="8 11">3.1.3.35</ecNumber>
        <ecNumber evidence="7 8 9 10 11">3.1.3.5</ecNumber>
        <ecNumber evidence="8 11">3.1.3.89</ecNumber>
        <ecNumber evidence="8 11">3.1.3.91</ecNumber>
        <ecNumber evidence="8 11">3.1.3.99</ecNumber>
    </recommendedName>
    <alternativeName>
        <fullName evidence="14 15">5'-deoxynucleotidase</fullName>
    </alternativeName>
    <alternativeName>
        <fullName>Ecto-5'-nucleotidase</fullName>
    </alternativeName>
    <alternativeName>
        <fullName evidence="14 15">IMP-specific 5'-nucleotidase</fullName>
    </alternativeName>
    <alternativeName>
        <fullName evidence="14 15">Thymidylate 5'-phosphatase</fullName>
    </alternativeName>
    <cdAntigenName>CD73</cdAntigenName>
</protein>
<dbReference type="EC" id="3.1.3.35" evidence="8 11"/>
<dbReference type="EC" id="3.1.3.5" evidence="7 8 9 10 11"/>
<dbReference type="EC" id="3.1.3.89" evidence="8 11"/>
<dbReference type="EC" id="3.1.3.91" evidence="8 11"/>
<dbReference type="EC" id="3.1.3.99" evidence="8 11"/>
<dbReference type="EMBL" id="X55740">
    <property type="protein sequence ID" value="CAA39271.1"/>
    <property type="molecule type" value="mRNA"/>
</dbReference>
<dbReference type="EMBL" id="AK075008">
    <property type="protein sequence ID" value="BAG52050.1"/>
    <property type="molecule type" value="mRNA"/>
</dbReference>
<dbReference type="EMBL" id="AL135903">
    <property type="status" value="NOT_ANNOTATED_CDS"/>
    <property type="molecule type" value="Genomic_DNA"/>
</dbReference>
<dbReference type="EMBL" id="AL589666">
    <property type="status" value="NOT_ANNOTATED_CDS"/>
    <property type="molecule type" value="Genomic_DNA"/>
</dbReference>
<dbReference type="EMBL" id="U21730">
    <property type="protein sequence ID" value="AAA96950.1"/>
    <property type="molecule type" value="Genomic_DNA"/>
</dbReference>
<dbReference type="EMBL" id="AF069067">
    <property type="protein sequence ID" value="AAC98672.1"/>
    <property type="molecule type" value="Genomic_DNA"/>
</dbReference>
<dbReference type="CCDS" id="CCDS5002.1">
    <molecule id="P21589-1"/>
</dbReference>
<dbReference type="CCDS" id="CCDS56439.1">
    <molecule id="P21589-2"/>
</dbReference>
<dbReference type="PIR" id="S11032">
    <property type="entry name" value="S11032"/>
</dbReference>
<dbReference type="RefSeq" id="NP_001191742.1">
    <molecule id="P21589-2"/>
    <property type="nucleotide sequence ID" value="NM_001204813.2"/>
</dbReference>
<dbReference type="RefSeq" id="NP_002517.1">
    <molecule id="P21589-1"/>
    <property type="nucleotide sequence ID" value="NM_002526.4"/>
</dbReference>
<dbReference type="PDB" id="4H1S">
    <property type="method" value="X-ray"/>
    <property type="resolution" value="2.20 A"/>
    <property type="chains" value="A/B=27-549"/>
</dbReference>
<dbReference type="PDB" id="4H1Y">
    <property type="method" value="X-ray"/>
    <property type="resolution" value="1.58 A"/>
    <property type="chains" value="P=27-549"/>
</dbReference>
<dbReference type="PDB" id="4H2B">
    <property type="method" value="X-ray"/>
    <property type="resolution" value="1.70 A"/>
    <property type="chains" value="A=27-549"/>
</dbReference>
<dbReference type="PDB" id="4H2F">
    <property type="method" value="X-ray"/>
    <property type="resolution" value="1.85 A"/>
    <property type="chains" value="A=27-549"/>
</dbReference>
<dbReference type="PDB" id="4H2G">
    <property type="method" value="X-ray"/>
    <property type="resolution" value="1.55 A"/>
    <property type="chains" value="A=27-549"/>
</dbReference>
<dbReference type="PDB" id="4H2I">
    <property type="method" value="X-ray"/>
    <property type="resolution" value="2.00 A"/>
    <property type="chains" value="A=27-549"/>
</dbReference>
<dbReference type="PDB" id="6HXW">
    <property type="method" value="X-ray"/>
    <property type="resolution" value="2.78 A"/>
    <property type="chains" value="A/B=27-553"/>
</dbReference>
<dbReference type="PDB" id="6S7F">
    <property type="method" value="X-ray"/>
    <property type="resolution" value="2.05 A"/>
    <property type="chains" value="A=27-549"/>
</dbReference>
<dbReference type="PDB" id="6S7H">
    <property type="method" value="X-ray"/>
    <property type="resolution" value="1.85 A"/>
    <property type="chains" value="A=27-549"/>
</dbReference>
<dbReference type="PDB" id="6TVE">
    <property type="method" value="X-ray"/>
    <property type="resolution" value="1.05 A"/>
    <property type="chains" value="P=27-549"/>
</dbReference>
<dbReference type="PDB" id="6TVG">
    <property type="method" value="X-ray"/>
    <property type="resolution" value="1.48 A"/>
    <property type="chains" value="A=27-549"/>
</dbReference>
<dbReference type="PDB" id="6TVX">
    <property type="method" value="X-ray"/>
    <property type="resolution" value="2.60 A"/>
    <property type="chains" value="A=27-549"/>
</dbReference>
<dbReference type="PDB" id="6TW0">
    <property type="method" value="X-ray"/>
    <property type="resolution" value="2.50 A"/>
    <property type="chains" value="A=27-549"/>
</dbReference>
<dbReference type="PDB" id="6TWA">
    <property type="method" value="X-ray"/>
    <property type="resolution" value="2.00 A"/>
    <property type="chains" value="A=27-549"/>
</dbReference>
<dbReference type="PDB" id="6TWF">
    <property type="method" value="X-ray"/>
    <property type="resolution" value="2.50 A"/>
    <property type="chains" value="A=27-549"/>
</dbReference>
<dbReference type="PDB" id="6VC9">
    <property type="method" value="X-ray"/>
    <property type="resolution" value="2.25 A"/>
    <property type="chains" value="A=27-549"/>
</dbReference>
<dbReference type="PDB" id="6VCA">
    <property type="method" value="X-ray"/>
    <property type="resolution" value="3.73 A"/>
    <property type="chains" value="A/B/C/D=27-549"/>
</dbReference>
<dbReference type="PDB" id="6XUE">
    <property type="method" value="X-ray"/>
    <property type="resolution" value="1.94 A"/>
    <property type="chains" value="A/B=27-549"/>
</dbReference>
<dbReference type="PDB" id="6XUG">
    <property type="method" value="X-ray"/>
    <property type="resolution" value="2.09 A"/>
    <property type="chains" value="A/B=27-549"/>
</dbReference>
<dbReference type="PDB" id="6XUQ">
    <property type="method" value="X-ray"/>
    <property type="resolution" value="1.97 A"/>
    <property type="chains" value="A=27-549"/>
</dbReference>
<dbReference type="PDB" id="6YE1">
    <property type="method" value="X-ray"/>
    <property type="resolution" value="2.66 A"/>
    <property type="chains" value="A/B=27-549"/>
</dbReference>
<dbReference type="PDB" id="6YE2">
    <property type="method" value="X-ray"/>
    <property type="resolution" value="2.44 A"/>
    <property type="chains" value="A/B=27-549"/>
</dbReference>
<dbReference type="PDB" id="6Z9B">
    <property type="method" value="X-ray"/>
    <property type="resolution" value="2.17 A"/>
    <property type="chains" value="A=27-549"/>
</dbReference>
<dbReference type="PDB" id="6Z9D">
    <property type="method" value="X-ray"/>
    <property type="resolution" value="1.90 A"/>
    <property type="chains" value="A=27-549"/>
</dbReference>
<dbReference type="PDB" id="7BBJ">
    <property type="method" value="X-ray"/>
    <property type="resolution" value="2.72 A"/>
    <property type="chains" value="A/B=27-549"/>
</dbReference>
<dbReference type="PDB" id="7JV8">
    <property type="method" value="X-ray"/>
    <property type="resolution" value="2.46 A"/>
    <property type="chains" value="A/B/C/D=27-549"/>
</dbReference>
<dbReference type="PDB" id="7JV9">
    <property type="method" value="X-ray"/>
    <property type="resolution" value="2.70 A"/>
    <property type="chains" value="A/B=27-549"/>
</dbReference>
<dbReference type="PDB" id="7P9N">
    <property type="method" value="X-ray"/>
    <property type="resolution" value="1.55 A"/>
    <property type="chains" value="A=27-549"/>
</dbReference>
<dbReference type="PDB" id="7P9R">
    <property type="method" value="X-ray"/>
    <property type="resolution" value="1.41 A"/>
    <property type="chains" value="A=27-549"/>
</dbReference>
<dbReference type="PDB" id="7P9T">
    <property type="method" value="X-ray"/>
    <property type="resolution" value="1.79 A"/>
    <property type="chains" value="A=27-549"/>
</dbReference>
<dbReference type="PDB" id="7PA4">
    <property type="method" value="X-ray"/>
    <property type="resolution" value="1.45 A"/>
    <property type="chains" value="A=27-549"/>
</dbReference>
<dbReference type="PDB" id="7PB5">
    <property type="method" value="X-ray"/>
    <property type="resolution" value="1.28 A"/>
    <property type="chains" value="A=27-549"/>
</dbReference>
<dbReference type="PDB" id="7PBA">
    <property type="method" value="X-ray"/>
    <property type="resolution" value="1.42 A"/>
    <property type="chains" value="A=27-549"/>
</dbReference>
<dbReference type="PDB" id="7PBB">
    <property type="method" value="X-ray"/>
    <property type="resolution" value="1.47 A"/>
    <property type="chains" value="A=27-549"/>
</dbReference>
<dbReference type="PDB" id="7PBY">
    <property type="method" value="X-ray"/>
    <property type="resolution" value="1.13 A"/>
    <property type="chains" value="A=27-549"/>
</dbReference>
<dbReference type="PDB" id="7PCP">
    <property type="method" value="X-ray"/>
    <property type="resolution" value="1.38 A"/>
    <property type="chains" value="A=27-549"/>
</dbReference>
<dbReference type="PDB" id="7PD9">
    <property type="method" value="X-ray"/>
    <property type="resolution" value="1.39 A"/>
    <property type="chains" value="A=27-549"/>
</dbReference>
<dbReference type="PDB" id="7QGA">
    <property type="method" value="X-ray"/>
    <property type="resolution" value="1.50 A"/>
    <property type="chains" value="A=27-549"/>
</dbReference>
<dbReference type="PDB" id="7QGL">
    <property type="method" value="X-ray"/>
    <property type="resolution" value="1.50 A"/>
    <property type="chains" value="A=27-549"/>
</dbReference>
<dbReference type="PDB" id="7QGM">
    <property type="method" value="X-ray"/>
    <property type="resolution" value="2.90 A"/>
    <property type="chains" value="A=1-549"/>
</dbReference>
<dbReference type="PDB" id="7QGO">
    <property type="method" value="X-ray"/>
    <property type="resolution" value="2.21 A"/>
    <property type="chains" value="A=27-549"/>
</dbReference>
<dbReference type="PDB" id="8ZNZ">
    <property type="method" value="EM"/>
    <property type="resolution" value="3.06 A"/>
    <property type="chains" value="A/B=26-549"/>
</dbReference>
<dbReference type="PDBsum" id="4H1S"/>
<dbReference type="PDBsum" id="4H1Y"/>
<dbReference type="PDBsum" id="4H2B"/>
<dbReference type="PDBsum" id="4H2F"/>
<dbReference type="PDBsum" id="4H2G"/>
<dbReference type="PDBsum" id="4H2I"/>
<dbReference type="PDBsum" id="6HXW"/>
<dbReference type="PDBsum" id="6S7F"/>
<dbReference type="PDBsum" id="6S7H"/>
<dbReference type="PDBsum" id="6TVE"/>
<dbReference type="PDBsum" id="6TVG"/>
<dbReference type="PDBsum" id="6TVX"/>
<dbReference type="PDBsum" id="6TW0"/>
<dbReference type="PDBsum" id="6TWA"/>
<dbReference type="PDBsum" id="6TWF"/>
<dbReference type="PDBsum" id="6VC9"/>
<dbReference type="PDBsum" id="6VCA"/>
<dbReference type="PDBsum" id="6XUE"/>
<dbReference type="PDBsum" id="6XUG"/>
<dbReference type="PDBsum" id="6XUQ"/>
<dbReference type="PDBsum" id="6YE1"/>
<dbReference type="PDBsum" id="6YE2"/>
<dbReference type="PDBsum" id="6Z9B"/>
<dbReference type="PDBsum" id="6Z9D"/>
<dbReference type="PDBsum" id="7BBJ"/>
<dbReference type="PDBsum" id="7JV8"/>
<dbReference type="PDBsum" id="7JV9"/>
<dbReference type="PDBsum" id="7P9N"/>
<dbReference type="PDBsum" id="7P9R"/>
<dbReference type="PDBsum" id="7P9T"/>
<dbReference type="PDBsum" id="7PA4"/>
<dbReference type="PDBsum" id="7PB5"/>
<dbReference type="PDBsum" id="7PBA"/>
<dbReference type="PDBsum" id="7PBB"/>
<dbReference type="PDBsum" id="7PBY"/>
<dbReference type="PDBsum" id="7PCP"/>
<dbReference type="PDBsum" id="7PD9"/>
<dbReference type="PDBsum" id="7QGA"/>
<dbReference type="PDBsum" id="7QGL"/>
<dbReference type="PDBsum" id="7QGM"/>
<dbReference type="PDBsum" id="7QGO"/>
<dbReference type="PDBsum" id="8ZNZ"/>
<dbReference type="EMDB" id="EMD-60281"/>
<dbReference type="SMR" id="P21589"/>
<dbReference type="BioGRID" id="110962">
    <property type="interactions" value="89"/>
</dbReference>
<dbReference type="DIP" id="DIP-59992N"/>
<dbReference type="FunCoup" id="P21589">
    <property type="interactions" value="607"/>
</dbReference>
<dbReference type="IntAct" id="P21589">
    <property type="interactions" value="52"/>
</dbReference>
<dbReference type="MINT" id="P21589"/>
<dbReference type="STRING" id="9606.ENSP00000257770"/>
<dbReference type="BindingDB" id="P21589"/>
<dbReference type="ChEMBL" id="CHEMBL5957"/>
<dbReference type="DrugBank" id="DB03148">
    <property type="generic name" value="Adenosine 5'-methylenediphosphate"/>
</dbReference>
<dbReference type="DrugBank" id="DB00201">
    <property type="generic name" value="Caffeine"/>
</dbReference>
<dbReference type="DrugBank" id="DB00987">
    <property type="generic name" value="Cytarabine"/>
</dbReference>
<dbReference type="DrugBank" id="DB12946">
    <property type="generic name" value="DPCPX"/>
</dbReference>
<dbReference type="DrugBank" id="DB00651">
    <property type="generic name" value="Dyphylline"/>
</dbReference>
<dbReference type="DrugBank" id="DB00824">
    <property type="generic name" value="Enprofylline"/>
</dbReference>
<dbReference type="DrugBank" id="DB00806">
    <property type="generic name" value="Pentoxifylline"/>
</dbReference>
<dbReference type="DrugBank" id="DB19160">
    <property type="generic name" value="Quemliclustat"/>
</dbReference>
<dbReference type="DrugBank" id="DB01412">
    <property type="generic name" value="Theobromine"/>
</dbReference>
<dbReference type="DrugBank" id="DB00277">
    <property type="generic name" value="Theophylline"/>
</dbReference>
<dbReference type="GuidetoPHARMACOLOGY" id="1232"/>
<dbReference type="DEPOD" id="NT5E"/>
<dbReference type="GlyCosmos" id="P21589">
    <property type="glycosylation" value="4 sites, No reported glycans"/>
</dbReference>
<dbReference type="GlyGen" id="P21589">
    <property type="glycosylation" value="10 sites, 23 N-linked glycans (3 sites), 1 O-linked glycan (1 site)"/>
</dbReference>
<dbReference type="iPTMnet" id="P21589"/>
<dbReference type="PhosphoSitePlus" id="P21589"/>
<dbReference type="SwissPalm" id="P21589"/>
<dbReference type="BioMuta" id="NT5E"/>
<dbReference type="DMDM" id="112825"/>
<dbReference type="CPTAC" id="CPTAC-552"/>
<dbReference type="CPTAC" id="CPTAC-5952"/>
<dbReference type="jPOST" id="P21589"/>
<dbReference type="MassIVE" id="P21589"/>
<dbReference type="PaxDb" id="9606-ENSP00000257770"/>
<dbReference type="PeptideAtlas" id="P21589"/>
<dbReference type="ProteomicsDB" id="53883">
    <molecule id="P21589-1"/>
</dbReference>
<dbReference type="ProteomicsDB" id="53884">
    <molecule id="P21589-2"/>
</dbReference>
<dbReference type="Pumba" id="P21589"/>
<dbReference type="ABCD" id="P21589">
    <property type="antibodies" value="24 sequenced antibodies"/>
</dbReference>
<dbReference type="Antibodypedia" id="3007">
    <property type="antibodies" value="1427 antibodies from 52 providers"/>
</dbReference>
<dbReference type="CPTC" id="P21589">
    <property type="antibodies" value="1 antibody"/>
</dbReference>
<dbReference type="DNASU" id="4907"/>
<dbReference type="Ensembl" id="ENST00000257770.8">
    <molecule id="P21589-1"/>
    <property type="protein sequence ID" value="ENSP00000257770.3"/>
    <property type="gene ID" value="ENSG00000135318.12"/>
</dbReference>
<dbReference type="Ensembl" id="ENST00000369651.7">
    <molecule id="P21589-2"/>
    <property type="protein sequence ID" value="ENSP00000358665.3"/>
    <property type="gene ID" value="ENSG00000135318.12"/>
</dbReference>
<dbReference type="GeneID" id="4907"/>
<dbReference type="KEGG" id="hsa:4907"/>
<dbReference type="MANE-Select" id="ENST00000257770.8">
    <property type="protein sequence ID" value="ENSP00000257770.3"/>
    <property type="RefSeq nucleotide sequence ID" value="NM_002526.4"/>
    <property type="RefSeq protein sequence ID" value="NP_002517.1"/>
</dbReference>
<dbReference type="UCSC" id="uc003pko.5">
    <molecule id="P21589-1"/>
    <property type="organism name" value="human"/>
</dbReference>
<dbReference type="AGR" id="HGNC:8021"/>
<dbReference type="CTD" id="4907"/>
<dbReference type="DisGeNET" id="4907"/>
<dbReference type="GeneCards" id="NT5E"/>
<dbReference type="HGNC" id="HGNC:8021">
    <property type="gene designation" value="NT5E"/>
</dbReference>
<dbReference type="HPA" id="ENSG00000135318">
    <property type="expression patterns" value="Tissue enhanced (cervix, retina)"/>
</dbReference>
<dbReference type="MalaCards" id="NT5E"/>
<dbReference type="MIM" id="129190">
    <property type="type" value="gene"/>
</dbReference>
<dbReference type="MIM" id="211800">
    <property type="type" value="phenotype"/>
</dbReference>
<dbReference type="neXtProt" id="NX_P21589"/>
<dbReference type="OpenTargets" id="ENSG00000135318"/>
<dbReference type="Orphanet" id="289601">
    <property type="disease" value="Hereditary arterial and articular multiple calcification syndrome"/>
</dbReference>
<dbReference type="PharmGKB" id="PA31804"/>
<dbReference type="VEuPathDB" id="HostDB:ENSG00000135318"/>
<dbReference type="eggNOG" id="KOG4419">
    <property type="taxonomic scope" value="Eukaryota"/>
</dbReference>
<dbReference type="GeneTree" id="ENSGT00530000063775"/>
<dbReference type="HOGENOM" id="CLU_005854_7_1_1"/>
<dbReference type="InParanoid" id="P21589"/>
<dbReference type="OMA" id="NYDCDSP"/>
<dbReference type="OrthoDB" id="7722975at2759"/>
<dbReference type="PAN-GO" id="P21589">
    <property type="GO annotations" value="3 GO annotations based on evolutionary models"/>
</dbReference>
<dbReference type="PhylomeDB" id="P21589"/>
<dbReference type="TreeFam" id="TF323589"/>
<dbReference type="BioCyc" id="MetaCyc:HS05981-MONOMER"/>
<dbReference type="BRENDA" id="3.1.3.5">
    <property type="organism ID" value="2681"/>
</dbReference>
<dbReference type="PathwayCommons" id="P21589"/>
<dbReference type="Reactome" id="R-HSA-196807">
    <property type="pathway name" value="Nicotinate metabolism"/>
</dbReference>
<dbReference type="Reactome" id="R-HSA-73621">
    <property type="pathway name" value="Pyrimidine catabolism"/>
</dbReference>
<dbReference type="Reactome" id="R-HSA-74259">
    <property type="pathway name" value="Purine catabolism"/>
</dbReference>
<dbReference type="Reactome" id="R-HSA-9660826">
    <property type="pathway name" value="Purinergic signaling in leishmaniasis infection"/>
</dbReference>
<dbReference type="SignaLink" id="P21589"/>
<dbReference type="SIGNOR" id="P21589"/>
<dbReference type="BioGRID-ORCS" id="4907">
    <property type="hits" value="16 hits in 1177 CRISPR screens"/>
</dbReference>
<dbReference type="CD-CODE" id="FB4E32DD">
    <property type="entry name" value="Presynaptic clusters and postsynaptic densities"/>
</dbReference>
<dbReference type="ChiTaRS" id="NT5E">
    <property type="organism name" value="human"/>
</dbReference>
<dbReference type="EvolutionaryTrace" id="P21589"/>
<dbReference type="GeneWiki" id="NT5E"/>
<dbReference type="GenomeRNAi" id="4907"/>
<dbReference type="Pharos" id="P21589">
    <property type="development level" value="Tchem"/>
</dbReference>
<dbReference type="PRO" id="PR:P21589"/>
<dbReference type="Proteomes" id="UP000005640">
    <property type="component" value="Chromosome 6"/>
</dbReference>
<dbReference type="RNAct" id="P21589">
    <property type="molecule type" value="protein"/>
</dbReference>
<dbReference type="Bgee" id="ENSG00000135318">
    <property type="expression patterns" value="Expressed in stromal cell of endometrium and 199 other cell types or tissues"/>
</dbReference>
<dbReference type="ExpressionAtlas" id="P21589">
    <property type="expression patterns" value="baseline and differential"/>
</dbReference>
<dbReference type="GO" id="GO:0009986">
    <property type="term" value="C:cell surface"/>
    <property type="evidence" value="ECO:0007005"/>
    <property type="project" value="UniProtKB"/>
</dbReference>
<dbReference type="GO" id="GO:0005829">
    <property type="term" value="C:cytosol"/>
    <property type="evidence" value="ECO:0000314"/>
    <property type="project" value="HPA"/>
</dbReference>
<dbReference type="GO" id="GO:0009897">
    <property type="term" value="C:external side of plasma membrane"/>
    <property type="evidence" value="ECO:0007669"/>
    <property type="project" value="Ensembl"/>
</dbReference>
<dbReference type="GO" id="GO:0070062">
    <property type="term" value="C:extracellular exosome"/>
    <property type="evidence" value="ECO:0007005"/>
    <property type="project" value="UniProtKB"/>
</dbReference>
<dbReference type="GO" id="GO:0016020">
    <property type="term" value="C:membrane"/>
    <property type="evidence" value="ECO:0000314"/>
    <property type="project" value="UniProtKB"/>
</dbReference>
<dbReference type="GO" id="GO:0005654">
    <property type="term" value="C:nucleoplasm"/>
    <property type="evidence" value="ECO:0000314"/>
    <property type="project" value="HPA"/>
</dbReference>
<dbReference type="GO" id="GO:0005886">
    <property type="term" value="C:plasma membrane"/>
    <property type="evidence" value="ECO:0000314"/>
    <property type="project" value="HPA"/>
</dbReference>
<dbReference type="GO" id="GO:0002953">
    <property type="term" value="F:5'-deoxynucleotidase activity"/>
    <property type="evidence" value="ECO:0000314"/>
    <property type="project" value="UniProtKB"/>
</dbReference>
<dbReference type="GO" id="GO:0008253">
    <property type="term" value="F:5'-nucleotidase activity"/>
    <property type="evidence" value="ECO:0000314"/>
    <property type="project" value="UniProtKB"/>
</dbReference>
<dbReference type="GO" id="GO:0050484">
    <property type="term" value="F:GMP 5'-nucleotidase activity"/>
    <property type="evidence" value="ECO:0000314"/>
    <property type="project" value="UniProtKB"/>
</dbReference>
<dbReference type="GO" id="GO:0042802">
    <property type="term" value="F:identical protein binding"/>
    <property type="evidence" value="ECO:0000314"/>
    <property type="project" value="UniProtKB"/>
</dbReference>
<dbReference type="GO" id="GO:0050483">
    <property type="term" value="F:IMP 5'-nucleotidase activity"/>
    <property type="evidence" value="ECO:0000314"/>
    <property type="project" value="UniProtKB"/>
</dbReference>
<dbReference type="GO" id="GO:0000166">
    <property type="term" value="F:nucleotide binding"/>
    <property type="evidence" value="ECO:0007669"/>
    <property type="project" value="UniProtKB-KW"/>
</dbReference>
<dbReference type="GO" id="GO:0050340">
    <property type="term" value="F:thymidylate 5'-phosphatase activity"/>
    <property type="evidence" value="ECO:0000314"/>
    <property type="project" value="UniProtKB"/>
</dbReference>
<dbReference type="GO" id="GO:0008270">
    <property type="term" value="F:zinc ion binding"/>
    <property type="evidence" value="ECO:0000314"/>
    <property type="project" value="UniProtKB"/>
</dbReference>
<dbReference type="GO" id="GO:0046086">
    <property type="term" value="P:adenosine biosynthetic process"/>
    <property type="evidence" value="ECO:0007669"/>
    <property type="project" value="Ensembl"/>
</dbReference>
<dbReference type="GO" id="GO:0046032">
    <property type="term" value="P:ADP catabolic process"/>
    <property type="evidence" value="ECO:0007669"/>
    <property type="project" value="Ensembl"/>
</dbReference>
<dbReference type="GO" id="GO:0006196">
    <property type="term" value="P:AMP catabolic process"/>
    <property type="evidence" value="ECO:0000318"/>
    <property type="project" value="GO_Central"/>
</dbReference>
<dbReference type="GO" id="GO:0046034">
    <property type="term" value="P:ATP metabolic process"/>
    <property type="evidence" value="ECO:0000314"/>
    <property type="project" value="MGI"/>
</dbReference>
<dbReference type="GO" id="GO:0055074">
    <property type="term" value="P:calcium ion homeostasis"/>
    <property type="evidence" value="ECO:0007669"/>
    <property type="project" value="Ensembl"/>
</dbReference>
<dbReference type="GO" id="GO:0006259">
    <property type="term" value="P:DNA metabolic process"/>
    <property type="evidence" value="ECO:0000304"/>
    <property type="project" value="ProtInc"/>
</dbReference>
<dbReference type="GO" id="GO:0140928">
    <property type="term" value="P:inhibition of non-skeletal tissue mineralization"/>
    <property type="evidence" value="ECO:0007669"/>
    <property type="project" value="Ensembl"/>
</dbReference>
<dbReference type="GO" id="GO:0007159">
    <property type="term" value="P:leukocyte cell-cell adhesion"/>
    <property type="evidence" value="ECO:0000314"/>
    <property type="project" value="CACAO"/>
</dbReference>
<dbReference type="GO" id="GO:0050728">
    <property type="term" value="P:negative regulation of inflammatory response"/>
    <property type="evidence" value="ECO:0007669"/>
    <property type="project" value="Ensembl"/>
</dbReference>
<dbReference type="GO" id="GO:0033198">
    <property type="term" value="P:response to ATP"/>
    <property type="evidence" value="ECO:0000314"/>
    <property type="project" value="MGI"/>
</dbReference>
<dbReference type="CDD" id="cd07409">
    <property type="entry name" value="MPP_CD73_N"/>
    <property type="match status" value="1"/>
</dbReference>
<dbReference type="FunFam" id="3.90.780.10:FF:000001">
    <property type="entry name" value="NT5E isoform 3"/>
    <property type="match status" value="1"/>
</dbReference>
<dbReference type="FunFam" id="3.60.21.10:FF:000020">
    <property type="entry name" value="NT5E isoform 4"/>
    <property type="match status" value="1"/>
</dbReference>
<dbReference type="Gene3D" id="3.60.21.10">
    <property type="match status" value="1"/>
</dbReference>
<dbReference type="Gene3D" id="3.90.780.10">
    <property type="entry name" value="5'-Nucleotidase, C-terminal domain"/>
    <property type="match status" value="1"/>
</dbReference>
<dbReference type="InterPro" id="IPR008334">
    <property type="entry name" value="5'-Nucleotdase_C"/>
</dbReference>
<dbReference type="InterPro" id="IPR036907">
    <property type="entry name" value="5'-Nucleotdase_C_sf"/>
</dbReference>
<dbReference type="InterPro" id="IPR006146">
    <property type="entry name" value="5'-Nucleotdase_CS"/>
</dbReference>
<dbReference type="InterPro" id="IPR006179">
    <property type="entry name" value="5_nucleotidase/apyrase"/>
</dbReference>
<dbReference type="InterPro" id="IPR004843">
    <property type="entry name" value="Calcineurin-like_PHP_ApaH"/>
</dbReference>
<dbReference type="InterPro" id="IPR029052">
    <property type="entry name" value="Metallo-depent_PP-like"/>
</dbReference>
<dbReference type="PANTHER" id="PTHR11575:SF24">
    <property type="entry name" value="5'-NUCLEOTIDASE"/>
    <property type="match status" value="1"/>
</dbReference>
<dbReference type="PANTHER" id="PTHR11575">
    <property type="entry name" value="5'-NUCLEOTIDASE-RELATED"/>
    <property type="match status" value="1"/>
</dbReference>
<dbReference type="Pfam" id="PF02872">
    <property type="entry name" value="5_nucleotid_C"/>
    <property type="match status" value="1"/>
</dbReference>
<dbReference type="Pfam" id="PF00149">
    <property type="entry name" value="Metallophos"/>
    <property type="match status" value="1"/>
</dbReference>
<dbReference type="PRINTS" id="PR01607">
    <property type="entry name" value="APYRASEFAMLY"/>
</dbReference>
<dbReference type="SUPFAM" id="SSF55816">
    <property type="entry name" value="5'-nucleotidase (syn. UDP-sugar hydrolase), C-terminal domain"/>
    <property type="match status" value="1"/>
</dbReference>
<dbReference type="SUPFAM" id="SSF56300">
    <property type="entry name" value="Metallo-dependent phosphatases"/>
    <property type="match status" value="1"/>
</dbReference>
<dbReference type="PROSITE" id="PS00785">
    <property type="entry name" value="5_NUCLEOTIDASE_1"/>
    <property type="match status" value="1"/>
</dbReference>
<dbReference type="PROSITE" id="PS00786">
    <property type="entry name" value="5_NUCLEOTIDASE_2"/>
    <property type="match status" value="1"/>
</dbReference>
<organism>
    <name type="scientific">Homo sapiens</name>
    <name type="common">Human</name>
    <dbReference type="NCBI Taxonomy" id="9606"/>
    <lineage>
        <taxon>Eukaryota</taxon>
        <taxon>Metazoa</taxon>
        <taxon>Chordata</taxon>
        <taxon>Craniata</taxon>
        <taxon>Vertebrata</taxon>
        <taxon>Euteleostomi</taxon>
        <taxon>Mammalia</taxon>
        <taxon>Eutheria</taxon>
        <taxon>Euarchontoglires</taxon>
        <taxon>Primates</taxon>
        <taxon>Haplorrhini</taxon>
        <taxon>Catarrhini</taxon>
        <taxon>Hominidae</taxon>
        <taxon>Homo</taxon>
    </lineage>
</organism>
<feature type="signal peptide" evidence="6">
    <location>
        <begin position="1"/>
        <end position="26"/>
    </location>
</feature>
<feature type="chain" id="PRO_0000000015" description="5'-nucleotidase" evidence="5">
    <location>
        <begin position="27"/>
        <end position="549"/>
    </location>
</feature>
<feature type="propeptide" id="PRO_0000000016" description="Removed in mature form" evidence="5">
    <location>
        <begin position="550"/>
        <end position="574"/>
    </location>
</feature>
<feature type="binding site" evidence="8 9 11 18 19 20 22 23 24">
    <location>
        <position position="36"/>
    </location>
    <ligand>
        <name>Zn(2+)</name>
        <dbReference type="ChEBI" id="CHEBI:29105"/>
        <label>1</label>
    </ligand>
</feature>
<feature type="binding site" evidence="8 9 11 18 24">
    <location>
        <position position="36"/>
    </location>
    <ligand>
        <name>Zn(2+)</name>
        <dbReference type="ChEBI" id="CHEBI:29105"/>
        <label>2</label>
    </ligand>
</feature>
<feature type="binding site" evidence="8 9 11 18 19 20 22 23 24">
    <location>
        <position position="38"/>
    </location>
    <ligand>
        <name>Zn(2+)</name>
        <dbReference type="ChEBI" id="CHEBI:29105"/>
        <label>1</label>
    </ligand>
</feature>
<feature type="binding site" evidence="8 9 11 18 19 20 22 23 24">
    <location>
        <position position="85"/>
    </location>
    <ligand>
        <name>Zn(2+)</name>
        <dbReference type="ChEBI" id="CHEBI:29105"/>
        <label>1</label>
    </ligand>
</feature>
<feature type="binding site" evidence="8 9 11 18 19 20 21 22 23 24">
    <location>
        <position position="85"/>
    </location>
    <ligand>
        <name>Zn(2+)</name>
        <dbReference type="ChEBI" id="CHEBI:29105"/>
        <label>2</label>
    </ligand>
</feature>
<feature type="binding site" evidence="8 9 11 18 19 20 21 22 23 24">
    <location>
        <position position="117"/>
    </location>
    <ligand>
        <name>Zn(2+)</name>
        <dbReference type="ChEBI" id="CHEBI:29105"/>
        <label>2</label>
    </ligand>
</feature>
<feature type="binding site" evidence="8 9 11 18 19 20 21 22 23 24">
    <location>
        <position position="220"/>
    </location>
    <ligand>
        <name>Zn(2+)</name>
        <dbReference type="ChEBI" id="CHEBI:29105"/>
        <label>2</label>
    </ligand>
</feature>
<feature type="binding site" evidence="8 9 11 18 19 20 21 22 23 24">
    <location>
        <position position="243"/>
    </location>
    <ligand>
        <name>Zn(2+)</name>
        <dbReference type="ChEBI" id="CHEBI:29105"/>
        <label>2</label>
    </ligand>
</feature>
<feature type="binding site" evidence="9 11 19 23 24">
    <location>
        <position position="354"/>
    </location>
    <ligand>
        <name>AMP</name>
        <dbReference type="ChEBI" id="CHEBI:456215"/>
    </ligand>
</feature>
<feature type="binding site" evidence="11 29">
    <location>
        <position position="354"/>
    </location>
    <ligand>
        <name>IMP</name>
        <dbReference type="ChEBI" id="CHEBI:58053"/>
    </ligand>
</feature>
<feature type="binding site" evidence="9 11 19 21 23 24">
    <location>
        <position position="390"/>
    </location>
    <ligand>
        <name>AMP</name>
        <dbReference type="ChEBI" id="CHEBI:456215"/>
    </ligand>
</feature>
<feature type="binding site" evidence="11 29">
    <location>
        <position position="390"/>
    </location>
    <ligand>
        <name>IMP</name>
        <dbReference type="ChEBI" id="CHEBI:58053"/>
    </ligand>
</feature>
<feature type="binding site" evidence="9 11 19 23 24">
    <location>
        <position position="395"/>
    </location>
    <ligand>
        <name>AMP</name>
        <dbReference type="ChEBI" id="CHEBI:456215"/>
    </ligand>
</feature>
<feature type="binding site" evidence="11 29">
    <location>
        <position position="395"/>
    </location>
    <ligand>
        <name>IMP</name>
        <dbReference type="ChEBI" id="CHEBI:58053"/>
    </ligand>
</feature>
<feature type="binding site" evidence="9 11 19 23 24">
    <location>
        <position position="417"/>
    </location>
    <ligand>
        <name>AMP</name>
        <dbReference type="ChEBI" id="CHEBI:456215"/>
    </ligand>
</feature>
<feature type="binding site" evidence="11 29">
    <location>
        <position position="417"/>
    </location>
    <ligand>
        <name>IMP</name>
        <dbReference type="ChEBI" id="CHEBI:58053"/>
    </ligand>
</feature>
<feature type="binding site" evidence="9 11 19 21 23 24">
    <location>
        <position position="500"/>
    </location>
    <ligand>
        <name>AMP</name>
        <dbReference type="ChEBI" id="CHEBI:456215"/>
    </ligand>
</feature>
<feature type="binding site" evidence="11 29">
    <location>
        <position position="500"/>
    </location>
    <ligand>
        <name>IMP</name>
        <dbReference type="ChEBI" id="CHEBI:58053"/>
    </ligand>
</feature>
<feature type="binding site" evidence="9 11 19 21 23 24">
    <location>
        <position position="506"/>
    </location>
    <ligand>
        <name>AMP</name>
        <dbReference type="ChEBI" id="CHEBI:456215"/>
    </ligand>
</feature>
<feature type="binding site" evidence="11 29">
    <location>
        <position position="506"/>
    </location>
    <ligand>
        <name>IMP</name>
        <dbReference type="ChEBI" id="CHEBI:58053"/>
    </ligand>
</feature>
<feature type="site" description="Transition state stabilizer" evidence="9">
    <location>
        <position position="118"/>
    </location>
</feature>
<feature type="site" description="Transition state stabilizer" evidence="17">
    <location>
        <position position="121"/>
    </location>
</feature>
<feature type="lipid moiety-binding region" description="GPI-anchor amidated serine" evidence="5">
    <location>
        <position position="549"/>
    </location>
</feature>
<feature type="glycosylation site" description="N-linked (GlcNAc...) asparagine" evidence="1">
    <location>
        <position position="53"/>
    </location>
</feature>
<feature type="glycosylation site" description="N-linked (GlcNAc...) asparagine" evidence="2 8 9">
    <location>
        <position position="311"/>
    </location>
</feature>
<feature type="glycosylation site" description="N-linked (GlcNAc...) asparagine" evidence="2 3">
    <location>
        <position position="333"/>
    </location>
</feature>
<feature type="glycosylation site" description="N-linked (GlcNAc...) asparagine" evidence="2">
    <location>
        <position position="403"/>
    </location>
</feature>
<feature type="disulfide bond" evidence="8 9 18 19 20 21 22 23">
    <location>
        <begin position="51"/>
        <end position="57"/>
    </location>
</feature>
<feature type="disulfide bond" evidence="8 9 18 19 20 21 22 23">
    <location>
        <begin position="353"/>
        <end position="358"/>
    </location>
</feature>
<feature type="disulfide bond" evidence="8 9 18 19 20 21 22 23">
    <location>
        <begin position="365"/>
        <end position="387"/>
    </location>
</feature>
<feature type="disulfide bond" evidence="8 9 18 19 20 21 22 23">
    <location>
        <begin position="476"/>
        <end position="479"/>
    </location>
</feature>
<feature type="splice variant" id="VSP_043076" description="In isoform 2." evidence="13">
    <location>
        <begin position="404"/>
        <end position="453"/>
    </location>
</feature>
<feature type="sequence variant" id="VAR_065185" description="In CALJA; absence from the plasma-membrane; exhibits no catalytic AMPase activity; dbSNP:rs387906620." evidence="4 10">
    <original>C</original>
    <variation>Y</variation>
    <location>
        <position position="358"/>
    </location>
</feature>
<feature type="sequence variant" id="VAR_022091" description="In dbSNP:rs2229523." evidence="12">
    <original>T</original>
    <variation>A</variation>
    <location>
        <position position="376"/>
    </location>
</feature>
<feature type="sequence variant" id="VAR_048103" description="In dbSNP:rs2229524.">
    <original>M</original>
    <variation>T</variation>
    <location>
        <position position="379"/>
    </location>
</feature>
<feature type="strand" evidence="34">
    <location>
        <begin position="27"/>
        <end position="34"/>
    </location>
</feature>
<feature type="strand" evidence="34">
    <location>
        <begin position="48"/>
        <end position="50"/>
    </location>
</feature>
<feature type="helix" evidence="34">
    <location>
        <begin position="54"/>
        <end position="56"/>
    </location>
</feature>
<feature type="helix" evidence="34">
    <location>
        <begin position="61"/>
        <end position="74"/>
    </location>
</feature>
<feature type="strand" evidence="34">
    <location>
        <begin position="76"/>
        <end position="82"/>
    </location>
</feature>
<feature type="strand" evidence="34">
    <location>
        <begin position="87"/>
        <end position="90"/>
    </location>
</feature>
<feature type="helix" evidence="34">
    <location>
        <begin position="91"/>
        <end position="96"/>
    </location>
</feature>
<feature type="helix" evidence="34">
    <location>
        <begin position="99"/>
        <end position="108"/>
    </location>
</feature>
<feature type="strand" evidence="34">
    <location>
        <begin position="111"/>
        <end position="114"/>
    </location>
</feature>
<feature type="helix" evidence="34">
    <location>
        <begin position="117"/>
        <end position="120"/>
    </location>
</feature>
<feature type="turn" evidence="34">
    <location>
        <begin position="121"/>
        <end position="124"/>
    </location>
</feature>
<feature type="helix" evidence="34">
    <location>
        <begin position="125"/>
        <end position="128"/>
    </location>
</feature>
<feature type="helix" evidence="34">
    <location>
        <begin position="131"/>
        <end position="134"/>
    </location>
</feature>
<feature type="strand" evidence="34">
    <location>
        <begin position="142"/>
        <end position="145"/>
    </location>
</feature>
<feature type="helix" evidence="34">
    <location>
        <begin position="148"/>
        <end position="154"/>
    </location>
</feature>
<feature type="turn" evidence="34">
    <location>
        <begin position="155"/>
        <end position="157"/>
    </location>
</feature>
<feature type="strand" evidence="34">
    <location>
        <begin position="158"/>
        <end position="166"/>
    </location>
</feature>
<feature type="strand" evidence="34">
    <location>
        <begin position="169"/>
        <end position="177"/>
    </location>
</feature>
<feature type="helix" evidence="34">
    <location>
        <begin position="181"/>
        <end position="184"/>
    </location>
</feature>
<feature type="strand" evidence="36">
    <location>
        <begin position="191"/>
        <end position="193"/>
    </location>
</feature>
<feature type="helix" evidence="34">
    <location>
        <begin position="196"/>
        <end position="209"/>
    </location>
</feature>
<feature type="strand" evidence="34">
    <location>
        <begin position="215"/>
        <end position="221"/>
    </location>
</feature>
<feature type="helix" evidence="34">
    <location>
        <begin position="223"/>
        <end position="232"/>
    </location>
</feature>
<feature type="strand" evidence="34">
    <location>
        <begin position="238"/>
        <end position="240"/>
    </location>
</feature>
<feature type="strand" evidence="34">
    <location>
        <begin position="250"/>
        <end position="252"/>
    </location>
</feature>
<feature type="strand" evidence="34">
    <location>
        <begin position="254"/>
        <end position="256"/>
    </location>
</feature>
<feature type="strand" evidence="34">
    <location>
        <begin position="263"/>
        <end position="268"/>
    </location>
</feature>
<feature type="strand" evidence="34">
    <location>
        <begin position="274"/>
        <end position="278"/>
    </location>
</feature>
<feature type="strand" evidence="34">
    <location>
        <begin position="285"/>
        <end position="294"/>
    </location>
</feature>
<feature type="strand" evidence="34">
    <location>
        <begin position="300"/>
        <end position="305"/>
    </location>
</feature>
<feature type="helix" evidence="34">
    <location>
        <begin position="318"/>
        <end position="335"/>
    </location>
</feature>
<feature type="strand" evidence="34">
    <location>
        <begin position="337"/>
        <end position="344"/>
    </location>
</feature>
<feature type="helix" evidence="34">
    <location>
        <begin position="350"/>
        <end position="353"/>
    </location>
</feature>
<feature type="helix" evidence="34">
    <location>
        <begin position="359"/>
        <end position="371"/>
    </location>
</feature>
<feature type="helix" evidence="37">
    <location>
        <begin position="372"/>
        <end position="374"/>
    </location>
</feature>
<feature type="turn" evidence="35">
    <location>
        <begin position="377"/>
        <end position="379"/>
    </location>
</feature>
<feature type="strand" evidence="34">
    <location>
        <begin position="387"/>
        <end position="390"/>
    </location>
</feature>
<feature type="helix" evidence="34">
    <location>
        <begin position="391"/>
        <end position="393"/>
    </location>
</feature>
<feature type="turn" evidence="34">
    <location>
        <begin position="400"/>
        <end position="404"/>
    </location>
</feature>
<feature type="strand" evidence="34">
    <location>
        <begin position="405"/>
        <end position="407"/>
    </location>
</feature>
<feature type="helix" evidence="34">
    <location>
        <begin position="408"/>
        <end position="414"/>
    </location>
</feature>
<feature type="strand" evidence="34">
    <location>
        <begin position="420"/>
        <end position="427"/>
    </location>
</feature>
<feature type="helix" evidence="34">
    <location>
        <begin position="428"/>
        <end position="438"/>
    </location>
</feature>
<feature type="turn" evidence="34">
    <location>
        <begin position="439"/>
        <end position="443"/>
    </location>
</feature>
<feature type="strand" evidence="34">
    <location>
        <begin position="450"/>
        <end position="459"/>
    </location>
</feature>
<feature type="strand" evidence="37">
    <location>
        <begin position="461"/>
        <end position="463"/>
    </location>
</feature>
<feature type="strand" evidence="34">
    <location>
        <begin position="469"/>
        <end position="475"/>
    </location>
</feature>
<feature type="strand" evidence="34">
    <location>
        <begin position="477"/>
        <end position="481"/>
    </location>
</feature>
<feature type="strand" evidence="34">
    <location>
        <begin position="484"/>
        <end position="486"/>
    </location>
</feature>
<feature type="strand" evidence="34">
    <location>
        <begin position="491"/>
        <end position="498"/>
    </location>
</feature>
<feature type="helix" evidence="34">
    <location>
        <begin position="499"/>
        <end position="502"/>
    </location>
</feature>
<feature type="helix" evidence="34">
    <location>
        <begin position="505"/>
        <end position="507"/>
    </location>
</feature>
<feature type="helix" evidence="34">
    <location>
        <begin position="509"/>
        <end position="514"/>
    </location>
</feature>
<feature type="strand" evidence="34">
    <location>
        <begin position="516"/>
        <end position="523"/>
    </location>
</feature>
<feature type="helix" evidence="34">
    <location>
        <begin position="524"/>
        <end position="535"/>
    </location>
</feature>
<feature type="strand" evidence="34">
    <location>
        <begin position="536"/>
        <end position="538"/>
    </location>
</feature>
<feature type="strand" evidence="34">
    <location>
        <begin position="544"/>
        <end position="548"/>
    </location>
</feature>
<comment type="function">
    <text evidence="7 8 9 10 11">Catalyzes the hydrolysis of nucleotide monophosphates, releasing inorganic phosphate and the corresponding nucleoside, with AMP being the preferred substrate (PubMed:21933152, PubMed:22997138, PubMed:23142347, PubMed:24887587, PubMed:34403084). Shows a preference for ribonucleotide monophosphates over their equivalent deoxyribose forms (PubMed:34403084). Other substrates include IMP, UMP, GMP, CMP, dAMP, dCMP, dTMP, NAD and NMN (PubMed:21933152, PubMed:22997138, PubMed:23142347, PubMed:24887587, PubMed:34403084).</text>
</comment>
<comment type="catalytic activity">
    <reaction evidence="7 8 9 10 11">
        <text>a ribonucleoside 5'-phosphate + H2O = a ribonucleoside + phosphate</text>
        <dbReference type="Rhea" id="RHEA:12484"/>
        <dbReference type="ChEBI" id="CHEBI:15377"/>
        <dbReference type="ChEBI" id="CHEBI:18254"/>
        <dbReference type="ChEBI" id="CHEBI:43474"/>
        <dbReference type="ChEBI" id="CHEBI:58043"/>
        <dbReference type="EC" id="3.1.3.5"/>
    </reaction>
</comment>
<comment type="catalytic activity">
    <reaction evidence="8 11">
        <text>a 2'-deoxyribonucleoside 5'-phosphate + H2O = a 2'-deoxyribonucleoside + phosphate</text>
        <dbReference type="Rhea" id="RHEA:36167"/>
        <dbReference type="ChEBI" id="CHEBI:15377"/>
        <dbReference type="ChEBI" id="CHEBI:18274"/>
        <dbReference type="ChEBI" id="CHEBI:43474"/>
        <dbReference type="ChEBI" id="CHEBI:65317"/>
        <dbReference type="EC" id="3.1.3.89"/>
    </reaction>
</comment>
<comment type="catalytic activity">
    <reaction evidence="8 11">
        <text>dTMP + H2O = thymidine + phosphate</text>
        <dbReference type="Rhea" id="RHEA:11080"/>
        <dbReference type="ChEBI" id="CHEBI:15377"/>
        <dbReference type="ChEBI" id="CHEBI:17748"/>
        <dbReference type="ChEBI" id="CHEBI:43474"/>
        <dbReference type="ChEBI" id="CHEBI:63528"/>
        <dbReference type="EC" id="3.1.3.35"/>
    </reaction>
</comment>
<comment type="catalytic activity">
    <reaction evidence="8 11">
        <text>CMP + H2O = cytidine + phosphate</text>
        <dbReference type="Rhea" id="RHEA:29367"/>
        <dbReference type="ChEBI" id="CHEBI:15377"/>
        <dbReference type="ChEBI" id="CHEBI:17562"/>
        <dbReference type="ChEBI" id="CHEBI:43474"/>
        <dbReference type="ChEBI" id="CHEBI:60377"/>
        <dbReference type="EC" id="3.1.3.91"/>
    </reaction>
</comment>
<comment type="catalytic activity">
    <reaction evidence="8 11">
        <text>IMP + H2O = inosine + phosphate</text>
        <dbReference type="Rhea" id="RHEA:27718"/>
        <dbReference type="ChEBI" id="CHEBI:15377"/>
        <dbReference type="ChEBI" id="CHEBI:17596"/>
        <dbReference type="ChEBI" id="CHEBI:43474"/>
        <dbReference type="ChEBI" id="CHEBI:58053"/>
        <dbReference type="EC" id="3.1.3.99"/>
    </reaction>
</comment>
<comment type="catalytic activity">
    <reaction evidence="7 8 9 10 11">
        <text>AMP + H2O = adenosine + phosphate</text>
        <dbReference type="Rhea" id="RHEA:29375"/>
        <dbReference type="ChEBI" id="CHEBI:15377"/>
        <dbReference type="ChEBI" id="CHEBI:16335"/>
        <dbReference type="ChEBI" id="CHEBI:43474"/>
        <dbReference type="ChEBI" id="CHEBI:456215"/>
    </reaction>
</comment>
<comment type="catalytic activity">
    <reaction evidence="8 11">
        <text>GMP + H2O = guanosine + phosphate</text>
        <dbReference type="Rhea" id="RHEA:27714"/>
        <dbReference type="ChEBI" id="CHEBI:15377"/>
        <dbReference type="ChEBI" id="CHEBI:16750"/>
        <dbReference type="ChEBI" id="CHEBI:43474"/>
        <dbReference type="ChEBI" id="CHEBI:58115"/>
    </reaction>
</comment>
<comment type="catalytic activity">
    <reaction evidence="8 11">
        <text>UMP + H2O = uridine + phosphate</text>
        <dbReference type="Rhea" id="RHEA:29359"/>
        <dbReference type="ChEBI" id="CHEBI:15377"/>
        <dbReference type="ChEBI" id="CHEBI:16704"/>
        <dbReference type="ChEBI" id="CHEBI:43474"/>
        <dbReference type="ChEBI" id="CHEBI:57865"/>
    </reaction>
</comment>
<comment type="catalytic activity">
    <reaction evidence="8 11">
        <text>dAMP + H2O = 2'-deoxyadenosine + phosphate</text>
        <dbReference type="Rhea" id="RHEA:29371"/>
        <dbReference type="ChEBI" id="CHEBI:15377"/>
        <dbReference type="ChEBI" id="CHEBI:17256"/>
        <dbReference type="ChEBI" id="CHEBI:43474"/>
        <dbReference type="ChEBI" id="CHEBI:58245"/>
    </reaction>
</comment>
<comment type="catalytic activity">
    <reaction evidence="11">
        <text>dCMP + H2O = 2'-deoxycytidine + phosphate</text>
        <dbReference type="Rhea" id="RHEA:29363"/>
        <dbReference type="ChEBI" id="CHEBI:15377"/>
        <dbReference type="ChEBI" id="CHEBI:15698"/>
        <dbReference type="ChEBI" id="CHEBI:43474"/>
        <dbReference type="ChEBI" id="CHEBI:57566"/>
    </reaction>
</comment>
<comment type="cofactor">
    <cofactor evidence="8 9 11">
        <name>Zn(2+)</name>
        <dbReference type="ChEBI" id="CHEBI:29105"/>
    </cofactor>
</comment>
<comment type="activity regulation">
    <text evidence="8 9 11">Inhibited by adenosine 5'-(alpha,beta-methylene)-diphosphate (AMPCP).</text>
</comment>
<comment type="biophysicochemical properties">
    <kinetics>
        <KM evidence="11">10.5 uM for AMP</KM>
        <KM evidence="9">6.62 uM for AMP</KM>
        <KM evidence="8">3.8 uM for AMP</KM>
        <KM evidence="8">6.5 uM for GMP</KM>
        <KM evidence="8">7.1 uM for IMP</KM>
        <KM evidence="8">8 uM for dTMP</KM>
        <KM evidence="8">31.6 uM for UMP</KM>
        <KM evidence="8">56.4 uM for CMP</KM>
        <KM evidence="8">114 uM for dAMP</KM>
        <KM evidence="8">880 uM for NMN</KM>
        <Vmax evidence="11">301.2 umol/min/mg enzyme for AMP</Vmax>
    </kinetics>
</comment>
<comment type="subunit">
    <text evidence="8 9">Homodimer.</text>
</comment>
<comment type="interaction">
    <interactant intactId="EBI-6393623">
        <id>P21589</id>
    </interactant>
    <interactant intactId="EBI-13044680">
        <id>Q9Y225-2</id>
        <label>RNF24</label>
    </interactant>
    <organismsDiffer>false</organismsDiffer>
    <experiments>3</experiments>
</comment>
<comment type="interaction">
    <interactant intactId="EBI-6393623">
        <id>P21589</id>
    </interactant>
    <interactant intactId="EBI-2129267">
        <id>Q8WWF5</id>
        <label>ZNRF4</label>
    </interactant>
    <organismsDiffer>false</organismsDiffer>
    <experiments>3</experiments>
</comment>
<comment type="subcellular location">
    <subcellularLocation>
        <location evidence="5 10">Cell membrane</location>
        <topology evidence="5">Lipid-anchor</topology>
        <topology evidence="5">GPI-anchor</topology>
    </subcellularLocation>
</comment>
<comment type="alternative products">
    <event type="alternative splicing"/>
    <isoform>
        <id>P21589-1</id>
        <name>1</name>
        <sequence type="displayed"/>
    </isoform>
    <isoform>
        <id>P21589-2</id>
        <name>2</name>
        <sequence type="described" ref="VSP_043076"/>
    </isoform>
</comment>
<comment type="disease" evidence="4 10">
    <disease id="DI-03016">
        <name>Calcification of joints and arteries</name>
        <acronym>CALJA</acronym>
        <description>A condition characterized by adult-onset calcification of the lower extremity arteries, including the iliac, femoral and tibial arteries, and hand and foot capsule joints. Age of onset has been reported as early as the second decade of life, usually involving intense joint pain or calcification in the hands.</description>
        <dbReference type="MIM" id="211800"/>
    </disease>
    <text>The disease is caused by variants affecting the gene represented in this entry.</text>
</comment>
<comment type="similarity">
    <text evidence="16">Belongs to the 5'-nucleotidase family.</text>
</comment>
<comment type="online information" name="Atlas of Genetics and Cytogenetics in Oncology and Haematology">
    <link uri="https://atlasgeneticsoncology.org/gene/44492/NT5E"/>
</comment>
<name>5NTD_HUMAN</name>